<sequence>MEKTNRKKLFDEDIDYVNEDHISSFAKALAWEEQYEILENEKSGASSDKESQDAATIQKETEELDDLGADELSTALNGMHKPDLISSKSDWWPINTSKSIPKTKIRKKSKKSSVNEGHSKITNEFRSSASYTMLRWPILIFISCWISLLCFMYIIVRAYVALSEYFLTWVGKRKELRNKLRASQNYEEWVQNALELDRFLNLDKWSENPKFSYYDSKTVELTISKLASLREEGRDNDLMVILQGCIKKNFAGIENRQLYSHRYYGTKYLVEKYIDEVIVCIDKVIESQQISFNDKRRFFRTVSKNYGKTALCLSGGACFTYTHFGIVKALLDNDLLPSIISGTSGGGLIAALSCTRTDDELKKLLVPELARKITACEDPWYVWIPRWWRTGARFDSLEWARKANFFTRGSTTFYESFKRTGRRLNISTVPSNPHSPVILCNNITSPNCIIWSSLLASSAVPGILNPVVLLMKDLKTDRVVPFSLGSKWRDGSLRTDIPIDALNTYYNVNFSIVSQVNPHISLFFFAPKGTVGRPVAIPRRKTHKEKYASLRGGFIATALEQLFKLEITKWLQMIKSLDLLPHLLEQDWSNIWLQRFSGSITIWPRNRLKDFWYILSDPTEERLAEMLSKGERAMFPRILFVKHRLSIEKAIEKGRKQTKLSANFNTLTSSDSGRTELSPEAAELQVEPAMFDDDEYDSDSSDDEVLSPNNKKHIDKFGTPNTEDGDDDEDAYEYYDDDDYGLSTEDEANQENTGNSQGEENDTGSRFLKSFFRAGSRDSKLHRRNTVF</sequence>
<name>PLPL_DEBHA</name>
<evidence type="ECO:0000250" key="1"/>
<evidence type="ECO:0000255" key="2"/>
<evidence type="ECO:0000255" key="3">
    <source>
        <dbReference type="PROSITE-ProRule" id="PRU01161"/>
    </source>
</evidence>
<evidence type="ECO:0000256" key="4">
    <source>
        <dbReference type="SAM" id="MobiDB-lite"/>
    </source>
</evidence>
<evidence type="ECO:0000305" key="5"/>
<gene>
    <name type="ordered locus">DEHA2B04136g</name>
</gene>
<organism>
    <name type="scientific">Debaryomyces hansenii (strain ATCC 36239 / CBS 767 / BCRC 21394 / JCM 1990 / NBRC 0083 / IGC 2968)</name>
    <name type="common">Yeast</name>
    <name type="synonym">Torulaspora hansenii</name>
    <dbReference type="NCBI Taxonomy" id="284592"/>
    <lineage>
        <taxon>Eukaryota</taxon>
        <taxon>Fungi</taxon>
        <taxon>Dikarya</taxon>
        <taxon>Ascomycota</taxon>
        <taxon>Saccharomycotina</taxon>
        <taxon>Pichiomycetes</taxon>
        <taxon>Debaryomycetaceae</taxon>
        <taxon>Debaryomyces</taxon>
    </lineage>
</organism>
<proteinExistence type="inferred from homology"/>
<keyword id="KW-0378">Hydrolase</keyword>
<keyword id="KW-0442">Lipid degradation</keyword>
<keyword id="KW-0443">Lipid metabolism</keyword>
<keyword id="KW-0472">Membrane</keyword>
<keyword id="KW-1185">Reference proteome</keyword>
<keyword id="KW-0812">Transmembrane</keyword>
<keyword id="KW-1133">Transmembrane helix</keyword>
<comment type="function">
    <text evidence="1">Probable lipid hydrolase.</text>
</comment>
<comment type="subcellular location">
    <subcellularLocation>
        <location evidence="5">Membrane</location>
        <topology evidence="5">Single-pass membrane protein</topology>
    </subcellularLocation>
</comment>
<comment type="similarity">
    <text evidence="5">Belongs to the PLPL family.</text>
</comment>
<feature type="chain" id="PRO_0000295558" description="Patatin-like phospholipase domain-containing protein DEHA2B04136g">
    <location>
        <begin position="1"/>
        <end position="788"/>
    </location>
</feature>
<feature type="transmembrane region" description="Helical" evidence="2">
    <location>
        <begin position="136"/>
        <end position="156"/>
    </location>
</feature>
<feature type="domain" description="PNPLA" evidence="3">
    <location>
        <begin position="311"/>
        <end position="503"/>
    </location>
</feature>
<feature type="region of interest" description="Disordered" evidence="4">
    <location>
        <begin position="662"/>
        <end position="771"/>
    </location>
</feature>
<feature type="short sequence motif" description="GXSXG" evidence="3">
    <location>
        <begin position="342"/>
        <end position="346"/>
    </location>
</feature>
<feature type="compositionally biased region" description="Polar residues" evidence="4">
    <location>
        <begin position="662"/>
        <end position="672"/>
    </location>
</feature>
<feature type="compositionally biased region" description="Acidic residues" evidence="4">
    <location>
        <begin position="690"/>
        <end position="705"/>
    </location>
</feature>
<feature type="compositionally biased region" description="Acidic residues" evidence="4">
    <location>
        <begin position="723"/>
        <end position="749"/>
    </location>
</feature>
<feature type="active site" description="Nucleophile" evidence="3">
    <location>
        <position position="344"/>
    </location>
</feature>
<feature type="active site" description="Proton acceptor" evidence="3">
    <location>
        <position position="490"/>
    </location>
</feature>
<reference key="1">
    <citation type="journal article" date="2004" name="Nature">
        <title>Genome evolution in yeasts.</title>
        <authorList>
            <person name="Dujon B."/>
            <person name="Sherman D."/>
            <person name="Fischer G."/>
            <person name="Durrens P."/>
            <person name="Casaregola S."/>
            <person name="Lafontaine I."/>
            <person name="de Montigny J."/>
            <person name="Marck C."/>
            <person name="Neuveglise C."/>
            <person name="Talla E."/>
            <person name="Goffard N."/>
            <person name="Frangeul L."/>
            <person name="Aigle M."/>
            <person name="Anthouard V."/>
            <person name="Babour A."/>
            <person name="Barbe V."/>
            <person name="Barnay S."/>
            <person name="Blanchin S."/>
            <person name="Beckerich J.-M."/>
            <person name="Beyne E."/>
            <person name="Bleykasten C."/>
            <person name="Boisrame A."/>
            <person name="Boyer J."/>
            <person name="Cattolico L."/>
            <person name="Confanioleri F."/>
            <person name="de Daruvar A."/>
            <person name="Despons L."/>
            <person name="Fabre E."/>
            <person name="Fairhead C."/>
            <person name="Ferry-Dumazet H."/>
            <person name="Groppi A."/>
            <person name="Hantraye F."/>
            <person name="Hennequin C."/>
            <person name="Jauniaux N."/>
            <person name="Joyet P."/>
            <person name="Kachouri R."/>
            <person name="Kerrest A."/>
            <person name="Koszul R."/>
            <person name="Lemaire M."/>
            <person name="Lesur I."/>
            <person name="Ma L."/>
            <person name="Muller H."/>
            <person name="Nicaud J.-M."/>
            <person name="Nikolski M."/>
            <person name="Oztas S."/>
            <person name="Ozier-Kalogeropoulos O."/>
            <person name="Pellenz S."/>
            <person name="Potier S."/>
            <person name="Richard G.-F."/>
            <person name="Straub M.-L."/>
            <person name="Suleau A."/>
            <person name="Swennen D."/>
            <person name="Tekaia F."/>
            <person name="Wesolowski-Louvel M."/>
            <person name="Westhof E."/>
            <person name="Wirth B."/>
            <person name="Zeniou-Meyer M."/>
            <person name="Zivanovic Y."/>
            <person name="Bolotin-Fukuhara M."/>
            <person name="Thierry A."/>
            <person name="Bouchier C."/>
            <person name="Caudron B."/>
            <person name="Scarpelli C."/>
            <person name="Gaillardin C."/>
            <person name="Weissenbach J."/>
            <person name="Wincker P."/>
            <person name="Souciet J.-L."/>
        </authorList>
    </citation>
    <scope>NUCLEOTIDE SEQUENCE [LARGE SCALE GENOMIC DNA]</scope>
    <source>
        <strain>ATCC 36239 / CBS 767 / BCRC 21394 / JCM 1990 / NBRC 0083 / IGC 2968</strain>
    </source>
</reference>
<protein>
    <recommendedName>
        <fullName>Patatin-like phospholipase domain-containing protein DEHA2B04136g</fullName>
        <ecNumber>3.1.1.-</ecNumber>
    </recommendedName>
</protein>
<accession>Q6BXC8</accession>
<dbReference type="EC" id="3.1.1.-"/>
<dbReference type="EMBL" id="CR382134">
    <property type="protein sequence ID" value="CAG85135.2"/>
    <property type="molecule type" value="Genomic_DNA"/>
</dbReference>
<dbReference type="RefSeq" id="XP_457141.2">
    <property type="nucleotide sequence ID" value="XM_457141.1"/>
</dbReference>
<dbReference type="GeneID" id="2913031"/>
<dbReference type="KEGG" id="dha:DEHA2B04136g"/>
<dbReference type="VEuPathDB" id="FungiDB:DEHA2B04136g"/>
<dbReference type="eggNOG" id="KOG2214">
    <property type="taxonomic scope" value="Eukaryota"/>
</dbReference>
<dbReference type="HOGENOM" id="CLU_009031_2_2_1"/>
<dbReference type="InParanoid" id="Q6BXC8"/>
<dbReference type="OMA" id="CSWFTRG"/>
<dbReference type="OrthoDB" id="15478at2759"/>
<dbReference type="Proteomes" id="UP000000599">
    <property type="component" value="Chromosome B"/>
</dbReference>
<dbReference type="GO" id="GO:0016020">
    <property type="term" value="C:membrane"/>
    <property type="evidence" value="ECO:0007669"/>
    <property type="project" value="UniProtKB-SubCell"/>
</dbReference>
<dbReference type="GO" id="GO:0004806">
    <property type="term" value="F:triacylglycerol lipase activity"/>
    <property type="evidence" value="ECO:0007669"/>
    <property type="project" value="InterPro"/>
</dbReference>
<dbReference type="GO" id="GO:0016042">
    <property type="term" value="P:lipid catabolic process"/>
    <property type="evidence" value="ECO:0007669"/>
    <property type="project" value="UniProtKB-KW"/>
</dbReference>
<dbReference type="GO" id="GO:0006641">
    <property type="term" value="P:triglyceride metabolic process"/>
    <property type="evidence" value="ECO:0007669"/>
    <property type="project" value="UniProtKB-ARBA"/>
</dbReference>
<dbReference type="CDD" id="cd07232">
    <property type="entry name" value="Pat_PLPL"/>
    <property type="match status" value="1"/>
</dbReference>
<dbReference type="Gene3D" id="3.40.1090.10">
    <property type="entry name" value="Cytosolic phospholipase A2 catalytic domain"/>
    <property type="match status" value="2"/>
</dbReference>
<dbReference type="InterPro" id="IPR016035">
    <property type="entry name" value="Acyl_Trfase/lysoPLipase"/>
</dbReference>
<dbReference type="InterPro" id="IPR050301">
    <property type="entry name" value="NTE"/>
</dbReference>
<dbReference type="InterPro" id="IPR002641">
    <property type="entry name" value="PNPLA_dom"/>
</dbReference>
<dbReference type="InterPro" id="IPR021771">
    <property type="entry name" value="Triacylglycerol_lipase_N"/>
</dbReference>
<dbReference type="PANTHER" id="PTHR14226">
    <property type="entry name" value="NEUROPATHY TARGET ESTERASE/SWISS CHEESE D.MELANOGASTER"/>
    <property type="match status" value="1"/>
</dbReference>
<dbReference type="PANTHER" id="PTHR14226:SF66">
    <property type="entry name" value="TRIACYLGLYCEROL LIPASE PTL2"/>
    <property type="match status" value="1"/>
</dbReference>
<dbReference type="Pfam" id="PF11815">
    <property type="entry name" value="DUF3336"/>
    <property type="match status" value="1"/>
</dbReference>
<dbReference type="Pfam" id="PF01734">
    <property type="entry name" value="Patatin"/>
    <property type="match status" value="1"/>
</dbReference>
<dbReference type="SUPFAM" id="SSF52151">
    <property type="entry name" value="FabD/lysophospholipase-like"/>
    <property type="match status" value="1"/>
</dbReference>
<dbReference type="PROSITE" id="PS51635">
    <property type="entry name" value="PNPLA"/>
    <property type="match status" value="1"/>
</dbReference>